<reference key="1">
    <citation type="journal article" date="2008" name="Genomics">
        <title>Evolution in the laboratory: the genome of Halobacterium salinarum strain R1 compared to that of strain NRC-1.</title>
        <authorList>
            <person name="Pfeiffer F."/>
            <person name="Schuster S.C."/>
            <person name="Broicher A."/>
            <person name="Falb M."/>
            <person name="Palm P."/>
            <person name="Rodewald K."/>
            <person name="Ruepp A."/>
            <person name="Soppa J."/>
            <person name="Tittor J."/>
            <person name="Oesterhelt D."/>
        </authorList>
    </citation>
    <scope>NUCLEOTIDE SEQUENCE [LARGE SCALE GENOMIC DNA]</scope>
    <source>
        <strain>ATCC 29341 / DSM 671 / R1</strain>
    </source>
</reference>
<keyword id="KW-0251">Elongation factor</keyword>
<keyword id="KW-0648">Protein biosynthesis</keyword>
<comment type="function">
    <text evidence="1">Promotes the exchange of GDP for GTP in EF-1-alpha/GDP, thus allowing the regeneration of EF-1-alpha/GTP that could then be used to form the ternary complex EF-1-alpha/GTP/AAtRNA.</text>
</comment>
<comment type="similarity">
    <text evidence="1">Belongs to the EF-1-beta/EF-1-delta family.</text>
</comment>
<proteinExistence type="inferred from homology"/>
<evidence type="ECO:0000255" key="1">
    <source>
        <dbReference type="HAMAP-Rule" id="MF_00043"/>
    </source>
</evidence>
<feature type="chain" id="PRO_0000366420" description="Elongation factor 1-beta">
    <location>
        <begin position="1"/>
        <end position="88"/>
    </location>
</feature>
<sequence length="88" mass="9022">MSKVAAVLKVMPDSPDIDLDGLEADLSESLPDGAEINGTDTEEVAFGLTALLTTVIVPDDSGGTEAVEDAFGAVDDVESVSVEEVGRL</sequence>
<gene>
    <name evidence="1" type="primary">ef1b</name>
    <name type="ordered locus">OE_2683R</name>
</gene>
<protein>
    <recommendedName>
        <fullName evidence="1">Elongation factor 1-beta</fullName>
        <shortName evidence="1">EF-1-beta</shortName>
    </recommendedName>
    <alternativeName>
        <fullName evidence="1">aEF-1beta</fullName>
    </alternativeName>
</protein>
<name>EF1B_HALS3</name>
<organism>
    <name type="scientific">Halobacterium salinarum (strain ATCC 29341 / DSM 671 / R1)</name>
    <dbReference type="NCBI Taxonomy" id="478009"/>
    <lineage>
        <taxon>Archaea</taxon>
        <taxon>Methanobacteriati</taxon>
        <taxon>Methanobacteriota</taxon>
        <taxon>Stenosarchaea group</taxon>
        <taxon>Halobacteria</taxon>
        <taxon>Halobacteriales</taxon>
        <taxon>Halobacteriaceae</taxon>
        <taxon>Halobacterium</taxon>
        <taxon>Halobacterium salinarum NRC-34001</taxon>
    </lineage>
</organism>
<accession>B0R511</accession>
<dbReference type="EMBL" id="AM774415">
    <property type="protein sequence ID" value="CAP13826.1"/>
    <property type="molecule type" value="Genomic_DNA"/>
</dbReference>
<dbReference type="RefSeq" id="WP_012289285.1">
    <property type="nucleotide sequence ID" value="NC_010364.1"/>
</dbReference>
<dbReference type="SMR" id="B0R511"/>
<dbReference type="EnsemblBacteria" id="CAP13826">
    <property type="protein sequence ID" value="CAP13826"/>
    <property type="gene ID" value="OE_2683R"/>
</dbReference>
<dbReference type="KEGG" id="hsl:OE_2683R"/>
<dbReference type="HOGENOM" id="CLU_165896_0_0_2"/>
<dbReference type="PhylomeDB" id="B0R511"/>
<dbReference type="Proteomes" id="UP000001321">
    <property type="component" value="Chromosome"/>
</dbReference>
<dbReference type="GO" id="GO:0003746">
    <property type="term" value="F:translation elongation factor activity"/>
    <property type="evidence" value="ECO:0007669"/>
    <property type="project" value="UniProtKB-UniRule"/>
</dbReference>
<dbReference type="CDD" id="cd00292">
    <property type="entry name" value="EF1B"/>
    <property type="match status" value="1"/>
</dbReference>
<dbReference type="Gene3D" id="3.30.70.60">
    <property type="match status" value="1"/>
</dbReference>
<dbReference type="HAMAP" id="MF_00043">
    <property type="entry name" value="EF1_beta"/>
    <property type="match status" value="1"/>
</dbReference>
<dbReference type="InterPro" id="IPR036219">
    <property type="entry name" value="eEF-1beta-like_sf"/>
</dbReference>
<dbReference type="InterPro" id="IPR014038">
    <property type="entry name" value="EF1B_bsu/dsu_GNE"/>
</dbReference>
<dbReference type="InterPro" id="IPR014717">
    <property type="entry name" value="Transl_elong_EF1B/ribsomal_bS6"/>
</dbReference>
<dbReference type="InterPro" id="IPR004542">
    <property type="entry name" value="Transl_elong_EF1B_B_arc"/>
</dbReference>
<dbReference type="NCBIfam" id="TIGR00489">
    <property type="entry name" value="aEF-1_beta"/>
    <property type="match status" value="1"/>
</dbReference>
<dbReference type="NCBIfam" id="NF001670">
    <property type="entry name" value="PRK00435.1"/>
    <property type="match status" value="1"/>
</dbReference>
<dbReference type="PANTHER" id="PTHR39647">
    <property type="entry name" value="ELONGATION FACTOR 1-BETA"/>
    <property type="match status" value="1"/>
</dbReference>
<dbReference type="PANTHER" id="PTHR39647:SF1">
    <property type="entry name" value="ELONGATION FACTOR 1-BETA"/>
    <property type="match status" value="1"/>
</dbReference>
<dbReference type="Pfam" id="PF00736">
    <property type="entry name" value="EF1_GNE"/>
    <property type="match status" value="1"/>
</dbReference>
<dbReference type="PIRSF" id="PIRSF006521">
    <property type="entry name" value="Transl_elong_EF1B_B_arc"/>
    <property type="match status" value="1"/>
</dbReference>
<dbReference type="SMART" id="SM00888">
    <property type="entry name" value="EF1_GNE"/>
    <property type="match status" value="1"/>
</dbReference>
<dbReference type="SUPFAM" id="SSF54984">
    <property type="entry name" value="eEF-1beta-like"/>
    <property type="match status" value="1"/>
</dbReference>